<protein>
    <recommendedName>
        <fullName evidence="1">Small ribosomal subunit protein uS17</fullName>
    </recommendedName>
    <alternativeName>
        <fullName evidence="2">30S ribosomal protein S17</fullName>
    </alternativeName>
</protein>
<proteinExistence type="inferred from homology"/>
<dbReference type="EMBL" id="BA000012">
    <property type="protein sequence ID" value="BAB47915.1"/>
    <property type="molecule type" value="Genomic_DNA"/>
</dbReference>
<dbReference type="RefSeq" id="WP_010909280.1">
    <property type="nucleotide sequence ID" value="NC_002678.2"/>
</dbReference>
<dbReference type="SMR" id="Q98N48"/>
<dbReference type="GeneID" id="91561411"/>
<dbReference type="KEGG" id="mlo:msr0304"/>
<dbReference type="eggNOG" id="COG0186">
    <property type="taxonomic scope" value="Bacteria"/>
</dbReference>
<dbReference type="HOGENOM" id="CLU_073626_1_1_5"/>
<dbReference type="Proteomes" id="UP000000552">
    <property type="component" value="Chromosome"/>
</dbReference>
<dbReference type="GO" id="GO:0022627">
    <property type="term" value="C:cytosolic small ribosomal subunit"/>
    <property type="evidence" value="ECO:0007669"/>
    <property type="project" value="TreeGrafter"/>
</dbReference>
<dbReference type="GO" id="GO:0019843">
    <property type="term" value="F:rRNA binding"/>
    <property type="evidence" value="ECO:0007669"/>
    <property type="project" value="UniProtKB-UniRule"/>
</dbReference>
<dbReference type="GO" id="GO:0003735">
    <property type="term" value="F:structural constituent of ribosome"/>
    <property type="evidence" value="ECO:0007669"/>
    <property type="project" value="InterPro"/>
</dbReference>
<dbReference type="GO" id="GO:0006412">
    <property type="term" value="P:translation"/>
    <property type="evidence" value="ECO:0007669"/>
    <property type="project" value="UniProtKB-UniRule"/>
</dbReference>
<dbReference type="CDD" id="cd00364">
    <property type="entry name" value="Ribosomal_uS17"/>
    <property type="match status" value="1"/>
</dbReference>
<dbReference type="Gene3D" id="2.40.50.140">
    <property type="entry name" value="Nucleic acid-binding proteins"/>
    <property type="match status" value="1"/>
</dbReference>
<dbReference type="HAMAP" id="MF_01345_B">
    <property type="entry name" value="Ribosomal_uS17_B"/>
    <property type="match status" value="1"/>
</dbReference>
<dbReference type="InterPro" id="IPR012340">
    <property type="entry name" value="NA-bd_OB-fold"/>
</dbReference>
<dbReference type="InterPro" id="IPR000266">
    <property type="entry name" value="Ribosomal_uS17"/>
</dbReference>
<dbReference type="InterPro" id="IPR019984">
    <property type="entry name" value="Ribosomal_uS17_bact/chlr"/>
</dbReference>
<dbReference type="InterPro" id="IPR019979">
    <property type="entry name" value="Ribosomal_uS17_CS"/>
</dbReference>
<dbReference type="NCBIfam" id="NF004123">
    <property type="entry name" value="PRK05610.1"/>
    <property type="match status" value="1"/>
</dbReference>
<dbReference type="NCBIfam" id="TIGR03635">
    <property type="entry name" value="uS17_bact"/>
    <property type="match status" value="1"/>
</dbReference>
<dbReference type="PANTHER" id="PTHR10744">
    <property type="entry name" value="40S RIBOSOMAL PROTEIN S11 FAMILY MEMBER"/>
    <property type="match status" value="1"/>
</dbReference>
<dbReference type="PANTHER" id="PTHR10744:SF1">
    <property type="entry name" value="SMALL RIBOSOMAL SUBUNIT PROTEIN US17M"/>
    <property type="match status" value="1"/>
</dbReference>
<dbReference type="Pfam" id="PF00366">
    <property type="entry name" value="Ribosomal_S17"/>
    <property type="match status" value="1"/>
</dbReference>
<dbReference type="PRINTS" id="PR00973">
    <property type="entry name" value="RIBOSOMALS17"/>
</dbReference>
<dbReference type="SUPFAM" id="SSF50249">
    <property type="entry name" value="Nucleic acid-binding proteins"/>
    <property type="match status" value="1"/>
</dbReference>
<dbReference type="PROSITE" id="PS00056">
    <property type="entry name" value="RIBOSOMAL_S17"/>
    <property type="match status" value="1"/>
</dbReference>
<keyword id="KW-0687">Ribonucleoprotein</keyword>
<keyword id="KW-0689">Ribosomal protein</keyword>
<keyword id="KW-0694">RNA-binding</keyword>
<keyword id="KW-0699">rRNA-binding</keyword>
<reference key="1">
    <citation type="journal article" date="2000" name="DNA Res.">
        <title>Complete genome structure of the nitrogen-fixing symbiotic bacterium Mesorhizobium loti.</title>
        <authorList>
            <person name="Kaneko T."/>
            <person name="Nakamura Y."/>
            <person name="Sato S."/>
            <person name="Asamizu E."/>
            <person name="Kato T."/>
            <person name="Sasamoto S."/>
            <person name="Watanabe A."/>
            <person name="Idesawa K."/>
            <person name="Ishikawa A."/>
            <person name="Kawashima K."/>
            <person name="Kimura T."/>
            <person name="Kishida Y."/>
            <person name="Kiyokawa C."/>
            <person name="Kohara M."/>
            <person name="Matsumoto M."/>
            <person name="Matsuno A."/>
            <person name="Mochizuki Y."/>
            <person name="Nakayama S."/>
            <person name="Nakazaki N."/>
            <person name="Shimpo S."/>
            <person name="Sugimoto M."/>
            <person name="Takeuchi C."/>
            <person name="Yamada M."/>
            <person name="Tabata S."/>
        </authorList>
    </citation>
    <scope>NUCLEOTIDE SEQUENCE [LARGE SCALE GENOMIC DNA]</scope>
    <source>
        <strain>LMG 29417 / CECT 9101 / MAFF 303099</strain>
    </source>
</reference>
<accession>Q98N48</accession>
<gene>
    <name evidence="1" type="primary">rpsQ</name>
    <name type="ordered locus">msr0304</name>
</gene>
<comment type="function">
    <text evidence="1">One of the primary rRNA binding proteins, it binds specifically to the 5'-end of 16S ribosomal RNA.</text>
</comment>
<comment type="subunit">
    <text evidence="1">Part of the 30S ribosomal subunit.</text>
</comment>
<comment type="similarity">
    <text evidence="1">Belongs to the universal ribosomal protein uS17 family.</text>
</comment>
<sequence length="79" mass="9176">MPKRILQGTVVSDKNEKTVVVKVERRFTHPVMKKTVRMTKKYKAHDENNAHKVGDQVFIQESKPISKDKRWIVVSSDQA</sequence>
<organism>
    <name type="scientific">Mesorhizobium japonicum (strain LMG 29417 / CECT 9101 / MAFF 303099)</name>
    <name type="common">Mesorhizobium loti (strain MAFF 303099)</name>
    <dbReference type="NCBI Taxonomy" id="266835"/>
    <lineage>
        <taxon>Bacteria</taxon>
        <taxon>Pseudomonadati</taxon>
        <taxon>Pseudomonadota</taxon>
        <taxon>Alphaproteobacteria</taxon>
        <taxon>Hyphomicrobiales</taxon>
        <taxon>Phyllobacteriaceae</taxon>
        <taxon>Mesorhizobium</taxon>
    </lineage>
</organism>
<evidence type="ECO:0000255" key="1">
    <source>
        <dbReference type="HAMAP-Rule" id="MF_01345"/>
    </source>
</evidence>
<evidence type="ECO:0000305" key="2"/>
<feature type="chain" id="PRO_0000233552" description="Small ribosomal subunit protein uS17">
    <location>
        <begin position="1"/>
        <end position="79"/>
    </location>
</feature>
<name>RS17_RHILO</name>